<dbReference type="EMBL" id="L22858">
    <property type="protein sequence ID" value="AAA66759.1"/>
    <property type="molecule type" value="Genomic_DNA"/>
</dbReference>
<dbReference type="PIR" id="B72866">
    <property type="entry name" value="B72866"/>
</dbReference>
<dbReference type="KEGG" id="vg:1403962"/>
<dbReference type="OrthoDB" id="18599at10239"/>
<dbReference type="Proteomes" id="UP000008292">
    <property type="component" value="Segment"/>
</dbReference>
<dbReference type="GO" id="GO:0030430">
    <property type="term" value="C:host cell cytoplasm"/>
    <property type="evidence" value="ECO:0007669"/>
    <property type="project" value="UniProtKB-SubCell"/>
</dbReference>
<dbReference type="GO" id="GO:0042025">
    <property type="term" value="C:host cell nucleus"/>
    <property type="evidence" value="ECO:0007669"/>
    <property type="project" value="UniProtKB-SubCell"/>
</dbReference>
<dbReference type="GO" id="GO:0019028">
    <property type="term" value="C:viral capsid"/>
    <property type="evidence" value="ECO:0007669"/>
    <property type="project" value="UniProtKB-KW"/>
</dbReference>
<dbReference type="InterPro" id="IPR007765">
    <property type="entry name" value="Baculo_p24"/>
</dbReference>
<dbReference type="Pfam" id="PF05073">
    <property type="entry name" value="Baculo_p24"/>
    <property type="match status" value="1"/>
</dbReference>
<accession>P41678</accession>
<evidence type="ECO:0000250" key="1"/>
<evidence type="ECO:0000269" key="2">
    <source>
    </source>
</evidence>
<evidence type="ECO:0000305" key="3"/>
<name>P24_NPVAC</name>
<feature type="chain" id="PRO_0000132890" description="Capsid protein p24">
    <location>
        <begin position="1"/>
        <end position="198"/>
    </location>
</feature>
<proteinExistence type="inferred from homology"/>
<reference key="1">
    <citation type="journal article" date="1994" name="Virology">
        <title>The complete DNA sequence of Autographa californica nuclear polyhedrosis virus.</title>
        <authorList>
            <person name="Ayres M.D."/>
            <person name="Howard S.C."/>
            <person name="Kuzio J."/>
            <person name="Lopez-Ferber M."/>
            <person name="Possee R.D."/>
        </authorList>
    </citation>
    <scope>NUCLEOTIDE SEQUENCE [LARGE SCALE GENOMIC DNA]</scope>
    <source>
        <strain>C6</strain>
    </source>
</reference>
<reference key="2">
    <citation type="journal article" date="1993" name="J. Gen. Virol.">
        <title>Immunocytochemical characterization of p24, a baculovirus capsid-associated protein.</title>
        <authorList>
            <person name="Wolgamot G.M."/>
            <person name="Gross C.H."/>
            <person name="Russell R.L."/>
            <person name="Rohrmann G.F."/>
        </authorList>
    </citation>
    <scope>SUBCELLULAR LOCATION</scope>
</reference>
<organism>
    <name type="scientific">Autographa californica nuclear polyhedrosis virus</name>
    <name type="common">AcMNPV</name>
    <dbReference type="NCBI Taxonomy" id="46015"/>
    <lineage>
        <taxon>Viruses</taxon>
        <taxon>Viruses incertae sedis</taxon>
        <taxon>Naldaviricetes</taxon>
        <taxon>Lefavirales</taxon>
        <taxon>Baculoviridae</taxon>
        <taxon>Alphabaculovirus</taxon>
        <taxon>Alphabaculovirus aucalifornicae</taxon>
    </lineage>
</organism>
<comment type="subcellular location">
    <subcellularLocation>
        <location evidence="2">Virion</location>
    </subcellularLocation>
    <subcellularLocation>
        <location evidence="2">Host cytoplasm</location>
    </subcellularLocation>
    <subcellularLocation>
        <location evidence="2">Host nucleus</location>
    </subcellularLocation>
    <text evidence="2">Component of the viral capsid.</text>
</comment>
<comment type="miscellaneous">
    <text evidence="1">Expressed late in infection.</text>
</comment>
<comment type="similarity">
    <text evidence="3">Belongs to the baculoviridae p24 family.</text>
</comment>
<protein>
    <recommendedName>
        <fullName>Capsid protein p24</fullName>
    </recommendedName>
</protein>
<keyword id="KW-0167">Capsid protein</keyword>
<keyword id="KW-1035">Host cytoplasm</keyword>
<keyword id="KW-1048">Host nucleus</keyword>
<keyword id="KW-0426">Late protein</keyword>
<keyword id="KW-1185">Reference proteome</keyword>
<keyword id="KW-0946">Virion</keyword>
<sequence length="198" mass="22110">MNTDAQSTSNTRNFMYSPDSSLEVVIITNSDGDHDGYLELTAAAKVMSPFLSNGSSAVWTNAAPSHKLIKNNKNYIHVFGLFKYLSNYNLNNKKRPKEYYTLKSIISDLLMGAQGKVFDPLCEVKTQLCAIQESLNEAISILNVHSNDAAANPPAPDINKLQELIQDLQSEYNKKITFTTDTILENLKNIKDLMCLNK</sequence>
<organismHost>
    <name type="scientific">Lepidoptera</name>
    <name type="common">butterflies and moths</name>
    <dbReference type="NCBI Taxonomy" id="7088"/>
</organismHost>
<gene>
    <name type="primary">P24</name>
</gene>